<evidence type="ECO:0000255" key="1">
    <source>
        <dbReference type="HAMAP-Rule" id="MF_00577"/>
    </source>
</evidence>
<evidence type="ECO:0000256" key="2">
    <source>
        <dbReference type="SAM" id="MobiDB-lite"/>
    </source>
</evidence>
<dbReference type="EC" id="4.2.1.49" evidence="1"/>
<dbReference type="EMBL" id="CP000709">
    <property type="protein sequence ID" value="ABQ62131.1"/>
    <property type="molecule type" value="Genomic_DNA"/>
</dbReference>
<dbReference type="RefSeq" id="WP_004689131.1">
    <property type="nucleotide sequence ID" value="NC_009504.1"/>
</dbReference>
<dbReference type="SMR" id="A5VVJ8"/>
<dbReference type="GeneID" id="45126242"/>
<dbReference type="KEGG" id="bov:BOV_A0874"/>
<dbReference type="HOGENOM" id="CLU_018868_0_1_5"/>
<dbReference type="PhylomeDB" id="A5VVJ8"/>
<dbReference type="UniPathway" id="UPA00379">
    <property type="reaction ID" value="UER00550"/>
</dbReference>
<dbReference type="Proteomes" id="UP000006383">
    <property type="component" value="Chromosome II"/>
</dbReference>
<dbReference type="GO" id="GO:0005737">
    <property type="term" value="C:cytoplasm"/>
    <property type="evidence" value="ECO:0007669"/>
    <property type="project" value="UniProtKB-SubCell"/>
</dbReference>
<dbReference type="GO" id="GO:0016153">
    <property type="term" value="F:urocanate hydratase activity"/>
    <property type="evidence" value="ECO:0007669"/>
    <property type="project" value="UniProtKB-UniRule"/>
</dbReference>
<dbReference type="GO" id="GO:0019556">
    <property type="term" value="P:L-histidine catabolic process to glutamate and formamide"/>
    <property type="evidence" value="ECO:0007669"/>
    <property type="project" value="UniProtKB-UniPathway"/>
</dbReference>
<dbReference type="GO" id="GO:0019557">
    <property type="term" value="P:L-histidine catabolic process to glutamate and formate"/>
    <property type="evidence" value="ECO:0007669"/>
    <property type="project" value="UniProtKB-UniPathway"/>
</dbReference>
<dbReference type="FunFam" id="3.40.50.10730:FF:000001">
    <property type="entry name" value="Urocanate hydratase"/>
    <property type="match status" value="1"/>
</dbReference>
<dbReference type="Gene3D" id="3.40.50.10730">
    <property type="entry name" value="Urocanase like domains"/>
    <property type="match status" value="1"/>
</dbReference>
<dbReference type="Gene3D" id="3.40.1770.10">
    <property type="entry name" value="Urocanase superfamily"/>
    <property type="match status" value="1"/>
</dbReference>
<dbReference type="HAMAP" id="MF_00577">
    <property type="entry name" value="HutU"/>
    <property type="match status" value="1"/>
</dbReference>
<dbReference type="InterPro" id="IPR055351">
    <property type="entry name" value="Urocanase"/>
</dbReference>
<dbReference type="InterPro" id="IPR023637">
    <property type="entry name" value="Urocanase-like"/>
</dbReference>
<dbReference type="InterPro" id="IPR035401">
    <property type="entry name" value="Urocanase_C"/>
</dbReference>
<dbReference type="InterPro" id="IPR038364">
    <property type="entry name" value="Urocanase_central_sf"/>
</dbReference>
<dbReference type="InterPro" id="IPR023636">
    <property type="entry name" value="Urocanase_CS"/>
</dbReference>
<dbReference type="InterPro" id="IPR035400">
    <property type="entry name" value="Urocanase_N"/>
</dbReference>
<dbReference type="InterPro" id="IPR035085">
    <property type="entry name" value="Urocanase_Rossmann-like"/>
</dbReference>
<dbReference type="InterPro" id="IPR036190">
    <property type="entry name" value="Urocanase_sf"/>
</dbReference>
<dbReference type="NCBIfam" id="TIGR01228">
    <property type="entry name" value="hutU"/>
    <property type="match status" value="1"/>
</dbReference>
<dbReference type="NCBIfam" id="NF003820">
    <property type="entry name" value="PRK05414.1"/>
    <property type="match status" value="1"/>
</dbReference>
<dbReference type="PANTHER" id="PTHR12216">
    <property type="entry name" value="UROCANATE HYDRATASE"/>
    <property type="match status" value="1"/>
</dbReference>
<dbReference type="PANTHER" id="PTHR12216:SF4">
    <property type="entry name" value="UROCANATE HYDRATASE"/>
    <property type="match status" value="1"/>
</dbReference>
<dbReference type="Pfam" id="PF01175">
    <property type="entry name" value="Urocanase"/>
    <property type="match status" value="1"/>
</dbReference>
<dbReference type="Pfam" id="PF17392">
    <property type="entry name" value="Urocanase_C"/>
    <property type="match status" value="1"/>
</dbReference>
<dbReference type="Pfam" id="PF17391">
    <property type="entry name" value="Urocanase_N"/>
    <property type="match status" value="1"/>
</dbReference>
<dbReference type="PIRSF" id="PIRSF001423">
    <property type="entry name" value="Urocanate_hydrat"/>
    <property type="match status" value="1"/>
</dbReference>
<dbReference type="SUPFAM" id="SSF111326">
    <property type="entry name" value="Urocanase"/>
    <property type="match status" value="1"/>
</dbReference>
<dbReference type="PROSITE" id="PS01233">
    <property type="entry name" value="UROCANASE"/>
    <property type="match status" value="1"/>
</dbReference>
<organism>
    <name type="scientific">Brucella ovis (strain ATCC 25840 / 63/290 / NCTC 10512)</name>
    <dbReference type="NCBI Taxonomy" id="444178"/>
    <lineage>
        <taxon>Bacteria</taxon>
        <taxon>Pseudomonadati</taxon>
        <taxon>Pseudomonadota</taxon>
        <taxon>Alphaproteobacteria</taxon>
        <taxon>Hyphomicrobiales</taxon>
        <taxon>Brucellaceae</taxon>
        <taxon>Brucella/Ochrobactrum group</taxon>
        <taxon>Brucella</taxon>
    </lineage>
</organism>
<gene>
    <name evidence="1" type="primary">hutU</name>
    <name type="ordered locus">BOV_A0874</name>
</gene>
<protein>
    <recommendedName>
        <fullName evidence="1">Urocanate hydratase</fullName>
        <shortName evidence="1">Urocanase</shortName>
        <ecNumber evidence="1">4.2.1.49</ecNumber>
    </recommendedName>
    <alternativeName>
        <fullName evidence="1">Imidazolonepropionate hydrolase</fullName>
    </alternativeName>
</protein>
<accession>A5VVJ8</accession>
<comment type="function">
    <text evidence="1">Catalyzes the conversion of urocanate to 4-imidazolone-5-propionate.</text>
</comment>
<comment type="catalytic activity">
    <reaction evidence="1">
        <text>4-imidazolone-5-propanoate = trans-urocanate + H2O</text>
        <dbReference type="Rhea" id="RHEA:13101"/>
        <dbReference type="ChEBI" id="CHEBI:15377"/>
        <dbReference type="ChEBI" id="CHEBI:17771"/>
        <dbReference type="ChEBI" id="CHEBI:77893"/>
        <dbReference type="EC" id="4.2.1.49"/>
    </reaction>
</comment>
<comment type="cofactor">
    <cofactor evidence="1">
        <name>NAD(+)</name>
        <dbReference type="ChEBI" id="CHEBI:57540"/>
    </cofactor>
    <text evidence="1">Binds 1 NAD(+) per subunit.</text>
</comment>
<comment type="pathway">
    <text evidence="1">Amino-acid degradation; L-histidine degradation into L-glutamate; N-formimidoyl-L-glutamate from L-histidine: step 2/3.</text>
</comment>
<comment type="subcellular location">
    <subcellularLocation>
        <location evidence="1">Cytoplasm</location>
    </subcellularLocation>
</comment>
<comment type="similarity">
    <text evidence="1">Belongs to the urocanase family.</text>
</comment>
<sequence>MSNPRHNEREVRSPRGDELNAKSWLTEAPLRMLMNNLDPDVAERPHELVVYGGIGRAARTWDDFDRIVATLKTLNDDETLLVQSGKPVGVFRTHKDAPRVLIANSNLVPHWANWDHFNELDKKGLAMYGQMTAGSWIYIGAQGIVQGTYETFVEAGRQHYGGNLKGRWILTGGLGGMGGAQPLAAVMAGACCLAVECDETRADFRLRTRYVDEKTHSLDEALAKIDAWTKAGEAKSIALIGNAAEIFPELVKRGVKPDIVTDQTSAHDPVHGYLPLGWTVAEWRAKQENDPKAVEKAARASMKVQVQAMLDFWNAGIPTVDYGNNIRQMALEEGLENAFAFPGFVPAYIRPLFCRGIGPFRWAALSGDPEDIAKTDAKVKELLPDNKHLHNWLDMAKERIAFQGLPARICWVGLGDRHRLGLAFNEMVRNGELKAPIVIGRDHLDSGSVASPNRETEAMKDGSDAVSDWPLLNALLNTASGATWVSLHHGGGVGMGFSQHAGMVICCDGTEDADRRLERVLWNDPATGVMRHADAGYDIALDWARKQGLRLPAILGN</sequence>
<keyword id="KW-0963">Cytoplasm</keyword>
<keyword id="KW-0369">Histidine metabolism</keyword>
<keyword id="KW-0456">Lyase</keyword>
<keyword id="KW-0520">NAD</keyword>
<reference key="1">
    <citation type="journal article" date="2009" name="PLoS ONE">
        <title>Genome degradation in Brucella ovis corresponds with narrowing of its host range and tissue tropism.</title>
        <authorList>
            <person name="Tsolis R.M."/>
            <person name="Seshadri R."/>
            <person name="Santos R.L."/>
            <person name="Sangari F.J."/>
            <person name="Lobo J.M."/>
            <person name="de Jong M.F."/>
            <person name="Ren Q."/>
            <person name="Myers G."/>
            <person name="Brinkac L.M."/>
            <person name="Nelson W.C."/>
            <person name="Deboy R.T."/>
            <person name="Angiuoli S."/>
            <person name="Khouri H."/>
            <person name="Dimitrov G."/>
            <person name="Robinson J.R."/>
            <person name="Mulligan S."/>
            <person name="Walker R.L."/>
            <person name="Elzer P.E."/>
            <person name="Hassan K.A."/>
            <person name="Paulsen I.T."/>
        </authorList>
    </citation>
    <scope>NUCLEOTIDE SEQUENCE [LARGE SCALE GENOMIC DNA]</scope>
    <source>
        <strain>ATCC 25840 / 63/290 / NCTC 10512</strain>
    </source>
</reference>
<proteinExistence type="inferred from homology"/>
<feature type="chain" id="PRO_1000025126" description="Urocanate hydratase">
    <location>
        <begin position="1"/>
        <end position="557"/>
    </location>
</feature>
<feature type="region of interest" description="Disordered" evidence="2">
    <location>
        <begin position="1"/>
        <end position="20"/>
    </location>
</feature>
<feature type="active site" evidence="1">
    <location>
        <position position="410"/>
    </location>
</feature>
<feature type="binding site" evidence="1">
    <location>
        <begin position="52"/>
        <end position="53"/>
    </location>
    <ligand>
        <name>NAD(+)</name>
        <dbReference type="ChEBI" id="CHEBI:57540"/>
    </ligand>
</feature>
<feature type="binding site" evidence="1">
    <location>
        <position position="130"/>
    </location>
    <ligand>
        <name>NAD(+)</name>
        <dbReference type="ChEBI" id="CHEBI:57540"/>
    </ligand>
</feature>
<feature type="binding site" evidence="1">
    <location>
        <begin position="176"/>
        <end position="178"/>
    </location>
    <ligand>
        <name>NAD(+)</name>
        <dbReference type="ChEBI" id="CHEBI:57540"/>
    </ligand>
</feature>
<feature type="binding site" evidence="1">
    <location>
        <position position="196"/>
    </location>
    <ligand>
        <name>NAD(+)</name>
        <dbReference type="ChEBI" id="CHEBI:57540"/>
    </ligand>
</feature>
<feature type="binding site" evidence="1">
    <location>
        <position position="201"/>
    </location>
    <ligand>
        <name>NAD(+)</name>
        <dbReference type="ChEBI" id="CHEBI:57540"/>
    </ligand>
</feature>
<feature type="binding site" evidence="1">
    <location>
        <begin position="242"/>
        <end position="243"/>
    </location>
    <ligand>
        <name>NAD(+)</name>
        <dbReference type="ChEBI" id="CHEBI:57540"/>
    </ligand>
</feature>
<feature type="binding site" evidence="1">
    <location>
        <begin position="263"/>
        <end position="267"/>
    </location>
    <ligand>
        <name>NAD(+)</name>
        <dbReference type="ChEBI" id="CHEBI:57540"/>
    </ligand>
</feature>
<feature type="binding site" evidence="1">
    <location>
        <begin position="273"/>
        <end position="274"/>
    </location>
    <ligand>
        <name>NAD(+)</name>
        <dbReference type="ChEBI" id="CHEBI:57540"/>
    </ligand>
</feature>
<feature type="binding site" evidence="1">
    <location>
        <position position="322"/>
    </location>
    <ligand>
        <name>NAD(+)</name>
        <dbReference type="ChEBI" id="CHEBI:57540"/>
    </ligand>
</feature>
<feature type="binding site" evidence="1">
    <location>
        <position position="492"/>
    </location>
    <ligand>
        <name>NAD(+)</name>
        <dbReference type="ChEBI" id="CHEBI:57540"/>
    </ligand>
</feature>
<name>HUTU_BRUO2</name>